<name>SYP_DICNV</name>
<reference key="1">
    <citation type="journal article" date="2007" name="Nat. Biotechnol.">
        <title>Genome sequence and identification of candidate vaccine antigens from the animal pathogen Dichelobacter nodosus.</title>
        <authorList>
            <person name="Myers G.S.A."/>
            <person name="Parker D."/>
            <person name="Al-Hasani K."/>
            <person name="Kennan R.M."/>
            <person name="Seemann T."/>
            <person name="Ren Q."/>
            <person name="Badger J.H."/>
            <person name="Selengut J.D."/>
            <person name="Deboy R.T."/>
            <person name="Tettelin H."/>
            <person name="Boyce J.D."/>
            <person name="McCarl V.P."/>
            <person name="Han X."/>
            <person name="Nelson W.C."/>
            <person name="Madupu R."/>
            <person name="Mohamoud Y."/>
            <person name="Holley T."/>
            <person name="Fedorova N."/>
            <person name="Khouri H."/>
            <person name="Bottomley S.P."/>
            <person name="Whittington R.J."/>
            <person name="Adler B."/>
            <person name="Songer J.G."/>
            <person name="Rood J.I."/>
            <person name="Paulsen I.T."/>
        </authorList>
    </citation>
    <scope>NUCLEOTIDE SEQUENCE [LARGE SCALE GENOMIC DNA]</scope>
    <source>
        <strain>VCS1703A</strain>
    </source>
</reference>
<evidence type="ECO:0000255" key="1">
    <source>
        <dbReference type="HAMAP-Rule" id="MF_01569"/>
    </source>
</evidence>
<feature type="chain" id="PRO_1000069135" description="Proline--tRNA ligase">
    <location>
        <begin position="1"/>
        <end position="572"/>
    </location>
</feature>
<accession>A5EXK9</accession>
<organism>
    <name type="scientific">Dichelobacter nodosus (strain VCS1703A)</name>
    <dbReference type="NCBI Taxonomy" id="246195"/>
    <lineage>
        <taxon>Bacteria</taxon>
        <taxon>Pseudomonadati</taxon>
        <taxon>Pseudomonadota</taxon>
        <taxon>Gammaproteobacteria</taxon>
        <taxon>Cardiobacteriales</taxon>
        <taxon>Cardiobacteriaceae</taxon>
        <taxon>Dichelobacter</taxon>
    </lineage>
</organism>
<dbReference type="EC" id="6.1.1.15" evidence="1"/>
<dbReference type="EMBL" id="CP000513">
    <property type="protein sequence ID" value="ABQ14164.1"/>
    <property type="molecule type" value="Genomic_DNA"/>
</dbReference>
<dbReference type="RefSeq" id="WP_012031441.1">
    <property type="nucleotide sequence ID" value="NC_009446.1"/>
</dbReference>
<dbReference type="SMR" id="A5EXK9"/>
<dbReference type="STRING" id="246195.DNO_1137"/>
<dbReference type="KEGG" id="dno:DNO_1137"/>
<dbReference type="eggNOG" id="COG0442">
    <property type="taxonomic scope" value="Bacteria"/>
</dbReference>
<dbReference type="HOGENOM" id="CLU_016739_0_0_6"/>
<dbReference type="OrthoDB" id="9809052at2"/>
<dbReference type="Proteomes" id="UP000000248">
    <property type="component" value="Chromosome"/>
</dbReference>
<dbReference type="GO" id="GO:0005829">
    <property type="term" value="C:cytosol"/>
    <property type="evidence" value="ECO:0007669"/>
    <property type="project" value="TreeGrafter"/>
</dbReference>
<dbReference type="GO" id="GO:0002161">
    <property type="term" value="F:aminoacyl-tRNA deacylase activity"/>
    <property type="evidence" value="ECO:0007669"/>
    <property type="project" value="InterPro"/>
</dbReference>
<dbReference type="GO" id="GO:0005524">
    <property type="term" value="F:ATP binding"/>
    <property type="evidence" value="ECO:0007669"/>
    <property type="project" value="UniProtKB-UniRule"/>
</dbReference>
<dbReference type="GO" id="GO:0004827">
    <property type="term" value="F:proline-tRNA ligase activity"/>
    <property type="evidence" value="ECO:0007669"/>
    <property type="project" value="UniProtKB-UniRule"/>
</dbReference>
<dbReference type="GO" id="GO:0006433">
    <property type="term" value="P:prolyl-tRNA aminoacylation"/>
    <property type="evidence" value="ECO:0007669"/>
    <property type="project" value="UniProtKB-UniRule"/>
</dbReference>
<dbReference type="CDD" id="cd04334">
    <property type="entry name" value="ProRS-INS"/>
    <property type="match status" value="1"/>
</dbReference>
<dbReference type="CDD" id="cd00861">
    <property type="entry name" value="ProRS_anticodon_short"/>
    <property type="match status" value="1"/>
</dbReference>
<dbReference type="CDD" id="cd00779">
    <property type="entry name" value="ProRS_core_prok"/>
    <property type="match status" value="1"/>
</dbReference>
<dbReference type="FunFam" id="3.30.930.10:FF:000015">
    <property type="entry name" value="Proline--tRNA ligase"/>
    <property type="match status" value="1"/>
</dbReference>
<dbReference type="FunFam" id="3.30.930.10:FF:000043">
    <property type="entry name" value="Proline--tRNA ligase"/>
    <property type="match status" value="1"/>
</dbReference>
<dbReference type="Gene3D" id="3.40.50.800">
    <property type="entry name" value="Anticodon-binding domain"/>
    <property type="match status" value="1"/>
</dbReference>
<dbReference type="Gene3D" id="3.30.930.10">
    <property type="entry name" value="Bira Bifunctional Protein, Domain 2"/>
    <property type="match status" value="2"/>
</dbReference>
<dbReference type="HAMAP" id="MF_01569">
    <property type="entry name" value="Pro_tRNA_synth_type1"/>
    <property type="match status" value="1"/>
</dbReference>
<dbReference type="InterPro" id="IPR002314">
    <property type="entry name" value="aa-tRNA-synt_IIb"/>
</dbReference>
<dbReference type="InterPro" id="IPR006195">
    <property type="entry name" value="aa-tRNA-synth_II"/>
</dbReference>
<dbReference type="InterPro" id="IPR045864">
    <property type="entry name" value="aa-tRNA-synth_II/BPL/LPL"/>
</dbReference>
<dbReference type="InterPro" id="IPR004154">
    <property type="entry name" value="Anticodon-bd"/>
</dbReference>
<dbReference type="InterPro" id="IPR036621">
    <property type="entry name" value="Anticodon-bd_dom_sf"/>
</dbReference>
<dbReference type="InterPro" id="IPR002316">
    <property type="entry name" value="Pro-tRNA-ligase_IIa"/>
</dbReference>
<dbReference type="InterPro" id="IPR004500">
    <property type="entry name" value="Pro-tRNA-synth_IIa_bac-type"/>
</dbReference>
<dbReference type="InterPro" id="IPR023717">
    <property type="entry name" value="Pro-tRNA-Synthase_IIa_type1"/>
</dbReference>
<dbReference type="InterPro" id="IPR050062">
    <property type="entry name" value="Pro-tRNA_synthetase"/>
</dbReference>
<dbReference type="InterPro" id="IPR044140">
    <property type="entry name" value="ProRS_anticodon_short"/>
</dbReference>
<dbReference type="InterPro" id="IPR033730">
    <property type="entry name" value="ProRS_core_prok"/>
</dbReference>
<dbReference type="InterPro" id="IPR036754">
    <property type="entry name" value="YbaK/aa-tRNA-synt-asso_dom_sf"/>
</dbReference>
<dbReference type="InterPro" id="IPR007214">
    <property type="entry name" value="YbaK/aa-tRNA-synth-assoc-dom"/>
</dbReference>
<dbReference type="NCBIfam" id="NF006625">
    <property type="entry name" value="PRK09194.1"/>
    <property type="match status" value="1"/>
</dbReference>
<dbReference type="NCBIfam" id="TIGR00409">
    <property type="entry name" value="proS_fam_II"/>
    <property type="match status" value="1"/>
</dbReference>
<dbReference type="PANTHER" id="PTHR42753">
    <property type="entry name" value="MITOCHONDRIAL RIBOSOME PROTEIN L39/PROLYL-TRNA LIGASE FAMILY MEMBER"/>
    <property type="match status" value="1"/>
</dbReference>
<dbReference type="PANTHER" id="PTHR42753:SF2">
    <property type="entry name" value="PROLINE--TRNA LIGASE"/>
    <property type="match status" value="1"/>
</dbReference>
<dbReference type="Pfam" id="PF03129">
    <property type="entry name" value="HGTP_anticodon"/>
    <property type="match status" value="1"/>
</dbReference>
<dbReference type="Pfam" id="PF00587">
    <property type="entry name" value="tRNA-synt_2b"/>
    <property type="match status" value="1"/>
</dbReference>
<dbReference type="Pfam" id="PF04073">
    <property type="entry name" value="tRNA_edit"/>
    <property type="match status" value="1"/>
</dbReference>
<dbReference type="PIRSF" id="PIRSF001535">
    <property type="entry name" value="ProRS_1"/>
    <property type="match status" value="1"/>
</dbReference>
<dbReference type="PRINTS" id="PR01046">
    <property type="entry name" value="TRNASYNTHPRO"/>
</dbReference>
<dbReference type="SUPFAM" id="SSF52954">
    <property type="entry name" value="Class II aaRS ABD-related"/>
    <property type="match status" value="1"/>
</dbReference>
<dbReference type="SUPFAM" id="SSF55681">
    <property type="entry name" value="Class II aaRS and biotin synthetases"/>
    <property type="match status" value="1"/>
</dbReference>
<dbReference type="SUPFAM" id="SSF55826">
    <property type="entry name" value="YbaK/ProRS associated domain"/>
    <property type="match status" value="1"/>
</dbReference>
<dbReference type="PROSITE" id="PS50862">
    <property type="entry name" value="AA_TRNA_LIGASE_II"/>
    <property type="match status" value="1"/>
</dbReference>
<keyword id="KW-0030">Aminoacyl-tRNA synthetase</keyword>
<keyword id="KW-0067">ATP-binding</keyword>
<keyword id="KW-0963">Cytoplasm</keyword>
<keyword id="KW-0436">Ligase</keyword>
<keyword id="KW-0547">Nucleotide-binding</keyword>
<keyword id="KW-0648">Protein biosynthesis</keyword>
<keyword id="KW-1185">Reference proteome</keyword>
<protein>
    <recommendedName>
        <fullName evidence="1">Proline--tRNA ligase</fullName>
        <ecNumber evidence="1">6.1.1.15</ecNumber>
    </recommendedName>
    <alternativeName>
        <fullName evidence="1">Prolyl-tRNA synthetase</fullName>
        <shortName evidence="1">ProRS</shortName>
    </alternativeName>
</protein>
<sequence length="572" mass="63483">MRLSQFWLVTKKESPAEAEVISHQLMLRAGMIRQTAVGIYSWLPLGLRVLNKVSAIIREEMDRAGALEVVMPAAQPAELWQESGRWHAYGPELQRFIDRHQRDYCIGPTHEEVVTDLVRRDLSSYKQLPVNLYQIQTKFRDEIRPRFGVMRGREFVMKDGYSFDLDVAGMKNSYQKMYDAYCRIFDRLGLNYRPVIADNGAIGGTGSHEFHVLAETGEDSIAFSNASDYAANIEKAEALPPTKPRPAPSLEMEKRATPDCKTIAQLVERYQLPIEKTLKTLLVEGADGGIVALVLRGDHELNTIKAEQLPEVAKPFSLAEESKVRGLMGAGFGSLGPVGLKALSVPVIVDHSAAICADFVVGANEDGYHYFNVNWERDAEITRTADIRNVVEGDPSPDGQGTLLIRRGIEVGHVFQLGEKYSKAMNLTVPLEDGTLCTPLMGCYGIGVTRVIAAAIEQNHDENGIIWSKELAPFSVAILPINADKSEAVRDAAEALYQKFLQAGVDVVLDDRNRRAGVMFADIDLIGIPARIVISDKTLATGSVEFKRRNEQETFHISLEEIVAQFCAEEKH</sequence>
<proteinExistence type="inferred from homology"/>
<comment type="function">
    <text evidence="1">Catalyzes the attachment of proline to tRNA(Pro) in a two-step reaction: proline is first activated by ATP to form Pro-AMP and then transferred to the acceptor end of tRNA(Pro). As ProRS can inadvertently accommodate and process non-cognate amino acids such as alanine and cysteine, to avoid such errors it has two additional distinct editing activities against alanine. One activity is designated as 'pretransfer' editing and involves the tRNA(Pro)-independent hydrolysis of activated Ala-AMP. The other activity is designated 'posttransfer' editing and involves deacylation of mischarged Ala-tRNA(Pro). The misacylated Cys-tRNA(Pro) is not edited by ProRS.</text>
</comment>
<comment type="catalytic activity">
    <reaction evidence="1">
        <text>tRNA(Pro) + L-proline + ATP = L-prolyl-tRNA(Pro) + AMP + diphosphate</text>
        <dbReference type="Rhea" id="RHEA:14305"/>
        <dbReference type="Rhea" id="RHEA-COMP:9700"/>
        <dbReference type="Rhea" id="RHEA-COMP:9702"/>
        <dbReference type="ChEBI" id="CHEBI:30616"/>
        <dbReference type="ChEBI" id="CHEBI:33019"/>
        <dbReference type="ChEBI" id="CHEBI:60039"/>
        <dbReference type="ChEBI" id="CHEBI:78442"/>
        <dbReference type="ChEBI" id="CHEBI:78532"/>
        <dbReference type="ChEBI" id="CHEBI:456215"/>
        <dbReference type="EC" id="6.1.1.15"/>
    </reaction>
</comment>
<comment type="subunit">
    <text evidence="1">Homodimer.</text>
</comment>
<comment type="subcellular location">
    <subcellularLocation>
        <location evidence="1">Cytoplasm</location>
    </subcellularLocation>
</comment>
<comment type="domain">
    <text evidence="1">Consists of three domains: the N-terminal catalytic domain, the editing domain and the C-terminal anticodon-binding domain.</text>
</comment>
<comment type="similarity">
    <text evidence="1">Belongs to the class-II aminoacyl-tRNA synthetase family. ProS type 1 subfamily.</text>
</comment>
<gene>
    <name evidence="1" type="primary">proS</name>
    <name type="ordered locus">DNO_1137</name>
</gene>